<comment type="function">
    <text evidence="1">Extracellular aminopeptidase that releases a wide variety of amino acids from natural peptides and contributes to pathogenicity.</text>
</comment>
<comment type="cofactor">
    <cofactor evidence="2">
        <name>Zn(2+)</name>
        <dbReference type="ChEBI" id="CHEBI:29105"/>
    </cofactor>
    <text evidence="2">Binds 2 Zn(2+) ions per subunit.</text>
</comment>
<comment type="subunit">
    <text evidence="1">Monomer.</text>
</comment>
<comment type="subcellular location">
    <subcellularLocation>
        <location evidence="1">Secreted</location>
    </subcellularLocation>
</comment>
<comment type="similarity">
    <text evidence="4">Belongs to the peptidase M28 family. M28A subfamily.</text>
</comment>
<feature type="signal peptide" evidence="3">
    <location>
        <begin position="1"/>
        <end position="21"/>
    </location>
</feature>
<feature type="chain" id="PRO_0000397770" description="Probable leucine aminopeptidase 2">
    <location>
        <begin position="22"/>
        <end position="495"/>
    </location>
</feature>
<feature type="domain" description="PA">
    <location>
        <begin position="130"/>
        <end position="216"/>
    </location>
</feature>
<feature type="active site" description="Proton acceptor" evidence="2">
    <location>
        <position position="303"/>
    </location>
</feature>
<feature type="binding site" evidence="2">
    <location>
        <position position="259"/>
    </location>
    <ligand>
        <name>Zn(2+)</name>
        <dbReference type="ChEBI" id="CHEBI:29105"/>
        <label>1</label>
        <note>catalytic</note>
    </ligand>
</feature>
<feature type="binding site" evidence="2">
    <location>
        <position position="271"/>
    </location>
    <ligand>
        <name>Zn(2+)</name>
        <dbReference type="ChEBI" id="CHEBI:29105"/>
        <label>1</label>
        <note>catalytic</note>
    </ligand>
</feature>
<feature type="binding site" evidence="2">
    <location>
        <position position="271"/>
    </location>
    <ligand>
        <name>Zn(2+)</name>
        <dbReference type="ChEBI" id="CHEBI:29105"/>
        <label>2</label>
        <note>catalytic</note>
    </ligand>
</feature>
<feature type="binding site" evidence="2">
    <location>
        <position position="304"/>
    </location>
    <ligand>
        <name>Zn(2+)</name>
        <dbReference type="ChEBI" id="CHEBI:29105"/>
        <label>2</label>
        <note>catalytic</note>
    </ligand>
</feature>
<feature type="binding site" evidence="2">
    <location>
        <position position="332"/>
    </location>
    <ligand>
        <name>Zn(2+)</name>
        <dbReference type="ChEBI" id="CHEBI:29105"/>
        <label>1</label>
        <note>catalytic</note>
    </ligand>
</feature>
<feature type="binding site" evidence="2">
    <location>
        <position position="430"/>
    </location>
    <ligand>
        <name>Zn(2+)</name>
        <dbReference type="ChEBI" id="CHEBI:29105"/>
        <label>2</label>
        <note>catalytic</note>
    </ligand>
</feature>
<feature type="site" description="Transition state stabilizer" evidence="2">
    <location>
        <position position="429"/>
    </location>
</feature>
<feature type="glycosylation site" description="N-linked (GlcNAc...) asparagine" evidence="3">
    <location>
        <position position="142"/>
    </location>
</feature>
<feature type="glycosylation site" description="N-linked (GlcNAc...) asparagine" evidence="3">
    <location>
        <position position="235"/>
    </location>
</feature>
<feature type="glycosylation site" description="N-linked (GlcNAc...) asparagine" evidence="3">
    <location>
        <position position="272"/>
    </location>
</feature>
<feature type="glycosylation site" description="N-linked (GlcNAc...) asparagine" evidence="3">
    <location>
        <position position="352"/>
    </location>
</feature>
<protein>
    <recommendedName>
        <fullName>Probable leucine aminopeptidase 2</fullName>
        <ecNumber>3.4.11.-</ecNumber>
    </recommendedName>
    <alternativeName>
        <fullName>Leucyl aminopeptidase 2</fullName>
        <shortName>LAP2</shortName>
    </alternativeName>
</protein>
<dbReference type="EC" id="3.4.11.-"/>
<dbReference type="EMBL" id="ACYE01000083">
    <property type="protein sequence ID" value="EFE43629.1"/>
    <property type="molecule type" value="Genomic_DNA"/>
</dbReference>
<dbReference type="RefSeq" id="XP_003024240.1">
    <property type="nucleotide sequence ID" value="XM_003024194.1"/>
</dbReference>
<dbReference type="SMR" id="D4D3D1"/>
<dbReference type="GlyCosmos" id="D4D3D1">
    <property type="glycosylation" value="4 sites, No reported glycans"/>
</dbReference>
<dbReference type="GeneID" id="9579360"/>
<dbReference type="KEGG" id="tve:TRV_01590"/>
<dbReference type="HOGENOM" id="CLU_024336_0_2_1"/>
<dbReference type="OrthoDB" id="1819at34384"/>
<dbReference type="Proteomes" id="UP000008383">
    <property type="component" value="Unassembled WGS sequence"/>
</dbReference>
<dbReference type="GO" id="GO:0005576">
    <property type="term" value="C:extracellular region"/>
    <property type="evidence" value="ECO:0007669"/>
    <property type="project" value="UniProtKB-SubCell"/>
</dbReference>
<dbReference type="GO" id="GO:0004177">
    <property type="term" value="F:aminopeptidase activity"/>
    <property type="evidence" value="ECO:0007669"/>
    <property type="project" value="UniProtKB-KW"/>
</dbReference>
<dbReference type="GO" id="GO:0046872">
    <property type="term" value="F:metal ion binding"/>
    <property type="evidence" value="ECO:0007669"/>
    <property type="project" value="UniProtKB-KW"/>
</dbReference>
<dbReference type="GO" id="GO:0008235">
    <property type="term" value="F:metalloexopeptidase activity"/>
    <property type="evidence" value="ECO:0007669"/>
    <property type="project" value="InterPro"/>
</dbReference>
<dbReference type="GO" id="GO:0006508">
    <property type="term" value="P:proteolysis"/>
    <property type="evidence" value="ECO:0007669"/>
    <property type="project" value="UniProtKB-KW"/>
</dbReference>
<dbReference type="CDD" id="cd03876">
    <property type="entry name" value="M28_SGAP_like"/>
    <property type="match status" value="1"/>
</dbReference>
<dbReference type="CDD" id="cd02130">
    <property type="entry name" value="PA_ScAPY_like"/>
    <property type="match status" value="1"/>
</dbReference>
<dbReference type="FunFam" id="3.40.630.10:FF:000054">
    <property type="entry name" value="Peptide hydrolase"/>
    <property type="match status" value="1"/>
</dbReference>
<dbReference type="Gene3D" id="3.50.30.30">
    <property type="match status" value="1"/>
</dbReference>
<dbReference type="Gene3D" id="3.40.630.10">
    <property type="entry name" value="Zn peptidases"/>
    <property type="match status" value="1"/>
</dbReference>
<dbReference type="InterPro" id="IPR045175">
    <property type="entry name" value="M28_fam"/>
</dbReference>
<dbReference type="InterPro" id="IPR041756">
    <property type="entry name" value="M28_SGAP-like"/>
</dbReference>
<dbReference type="InterPro" id="IPR046450">
    <property type="entry name" value="PA_dom_sf"/>
</dbReference>
<dbReference type="InterPro" id="IPR003137">
    <property type="entry name" value="PA_domain"/>
</dbReference>
<dbReference type="InterPro" id="IPR007484">
    <property type="entry name" value="Peptidase_M28"/>
</dbReference>
<dbReference type="PANTHER" id="PTHR12147">
    <property type="entry name" value="METALLOPEPTIDASE M28 FAMILY MEMBER"/>
    <property type="match status" value="1"/>
</dbReference>
<dbReference type="PANTHER" id="PTHR12147:SF57">
    <property type="entry name" value="PEPTIDE HYDROLASE"/>
    <property type="match status" value="1"/>
</dbReference>
<dbReference type="Pfam" id="PF02225">
    <property type="entry name" value="PA"/>
    <property type="match status" value="1"/>
</dbReference>
<dbReference type="Pfam" id="PF04389">
    <property type="entry name" value="Peptidase_M28"/>
    <property type="match status" value="1"/>
</dbReference>
<dbReference type="SUPFAM" id="SSF52025">
    <property type="entry name" value="PA domain"/>
    <property type="match status" value="1"/>
</dbReference>
<dbReference type="SUPFAM" id="SSF53187">
    <property type="entry name" value="Zn-dependent exopeptidases"/>
    <property type="match status" value="1"/>
</dbReference>
<sequence length="495" mass="53241">MKSQLLSLAVAVTTISQGVVGQEPFGWPFKPMVTQDDLQNKIKLKDIMAGVEKLQSISDAHPEKNRVFGGNGHKDTVEWIYNEIKATGYYDVKKQEQVHLWSHAEATVSANGKDLKASAMSYSPPASKIMAELVVAKNNGCNATDYPENTQGKIVLVERGVCSFGEKSSQAGDAKAAGAIVYNNVPGSLAGTLGGLDKRHVPTAGLSQEDGKNLATLIASGKVDVTMNVISLFENRTTWNVIAETKGGDHNNVIMLGAHSDSVDAGPGINDNGSGSIGIMTVAKALTNFKLNNAVRFAWWTAEEFGLLGSTFYVNSLDDRELHKVKLYLNFDMIGSPNFANQIYDGDGSAYNMTGPAGSAEIEYLFEKFFDDQGIPHQPTAFTGRSDYSAFIKRNVPAGGLFTGAEVVKTPEQVKLFGGEAGVAYDKNYHGKGDTVANINKGAIFLNTRAIAYSVAEYARSLKGFPTRPKTGKRDVNPQYSKMPGGGCGHHTVFM</sequence>
<gene>
    <name type="primary">LAP2</name>
    <name type="ORF">TRV_01590</name>
</gene>
<accession>D4D3D1</accession>
<keyword id="KW-0031">Aminopeptidase</keyword>
<keyword id="KW-0325">Glycoprotein</keyword>
<keyword id="KW-0378">Hydrolase</keyword>
<keyword id="KW-0479">Metal-binding</keyword>
<keyword id="KW-0482">Metalloprotease</keyword>
<keyword id="KW-0645">Protease</keyword>
<keyword id="KW-0964">Secreted</keyword>
<keyword id="KW-0732">Signal</keyword>
<keyword id="KW-0843">Virulence</keyword>
<keyword id="KW-0862">Zinc</keyword>
<reference key="1">
    <citation type="journal article" date="2011" name="Genome Biol.">
        <title>Comparative and functional genomics provide insights into the pathogenicity of dermatophytic fungi.</title>
        <authorList>
            <person name="Burmester A."/>
            <person name="Shelest E."/>
            <person name="Gloeckner G."/>
            <person name="Heddergott C."/>
            <person name="Schindler S."/>
            <person name="Staib P."/>
            <person name="Heidel A."/>
            <person name="Felder M."/>
            <person name="Petzold A."/>
            <person name="Szafranski K."/>
            <person name="Feuermann M."/>
            <person name="Pedruzzi I."/>
            <person name="Priebe S."/>
            <person name="Groth M."/>
            <person name="Winkler R."/>
            <person name="Li W."/>
            <person name="Kniemeyer O."/>
            <person name="Schroeckh V."/>
            <person name="Hertweck C."/>
            <person name="Hube B."/>
            <person name="White T.C."/>
            <person name="Platzer M."/>
            <person name="Guthke R."/>
            <person name="Heitman J."/>
            <person name="Woestemeyer J."/>
            <person name="Zipfel P.F."/>
            <person name="Monod M."/>
            <person name="Brakhage A.A."/>
        </authorList>
    </citation>
    <scope>NUCLEOTIDE SEQUENCE [LARGE SCALE GENOMIC DNA]</scope>
    <source>
        <strain>HKI 0517</strain>
    </source>
</reference>
<name>LAP2_TRIVH</name>
<evidence type="ECO:0000250" key="1"/>
<evidence type="ECO:0000250" key="2">
    <source>
        <dbReference type="UniProtKB" id="P80561"/>
    </source>
</evidence>
<evidence type="ECO:0000255" key="3"/>
<evidence type="ECO:0000305" key="4"/>
<proteinExistence type="inferred from homology"/>
<organism>
    <name type="scientific">Trichophyton verrucosum (strain HKI 0517)</name>
    <dbReference type="NCBI Taxonomy" id="663202"/>
    <lineage>
        <taxon>Eukaryota</taxon>
        <taxon>Fungi</taxon>
        <taxon>Dikarya</taxon>
        <taxon>Ascomycota</taxon>
        <taxon>Pezizomycotina</taxon>
        <taxon>Eurotiomycetes</taxon>
        <taxon>Eurotiomycetidae</taxon>
        <taxon>Onygenales</taxon>
        <taxon>Arthrodermataceae</taxon>
        <taxon>Trichophyton</taxon>
    </lineage>
</organism>